<sequence length="267" mass="30904">MYYIVASDLDGTLLSPQFYLTEYTKKIIKRLVNKGIYFVIATGRHYNEAKEIQKMLNVPVFLITSNGARIYDLNKKLIYSCDIEQKVVKELLQKCLLNHDILIQLYSHNNWYVSNNNYSASSLYVSFSFRSKIFEFKTIIKKKISKIFFTCKNVKKLLCLEKYIISHWGKYVNVSFSFLNCLEIMSKTVSKGNSLQLIANMLGLSIKNCISFGDGMNDKEMLDMSGKGCMMDNSHYLLKKSLPNLEIIGSNKFDSVAMYLNKIYFKK</sequence>
<feature type="chain" id="PRO_0000054433" description="Putative phosphatase bbp_030">
    <location>
        <begin position="1"/>
        <end position="267"/>
    </location>
</feature>
<feature type="active site" description="Nucleophile" evidence="1">
    <location>
        <position position="8"/>
    </location>
</feature>
<feature type="binding site" evidence="1">
    <location>
        <position position="8"/>
    </location>
    <ligand>
        <name>Mg(2+)</name>
        <dbReference type="ChEBI" id="CHEBI:18420"/>
    </ligand>
</feature>
<feature type="binding site" evidence="1">
    <location>
        <position position="9"/>
    </location>
    <ligand>
        <name>phosphate</name>
        <dbReference type="ChEBI" id="CHEBI:43474"/>
    </ligand>
</feature>
<feature type="binding site" evidence="1">
    <location>
        <position position="10"/>
    </location>
    <ligand>
        <name>Mg(2+)</name>
        <dbReference type="ChEBI" id="CHEBI:18420"/>
    </ligand>
</feature>
<feature type="binding site" evidence="1">
    <location>
        <begin position="42"/>
        <end position="43"/>
    </location>
    <ligand>
        <name>phosphate</name>
        <dbReference type="ChEBI" id="CHEBI:43474"/>
    </ligand>
</feature>
<feature type="binding site" evidence="1">
    <location>
        <position position="191"/>
    </location>
    <ligand>
        <name>phosphate</name>
        <dbReference type="ChEBI" id="CHEBI:43474"/>
    </ligand>
</feature>
<feature type="binding site" evidence="1">
    <location>
        <position position="214"/>
    </location>
    <ligand>
        <name>Mg(2+)</name>
        <dbReference type="ChEBI" id="CHEBI:18420"/>
    </ligand>
</feature>
<feature type="binding site" evidence="1">
    <location>
        <position position="217"/>
    </location>
    <ligand>
        <name>phosphate</name>
        <dbReference type="ChEBI" id="CHEBI:43474"/>
    </ligand>
</feature>
<reference key="1">
    <citation type="journal article" date="2003" name="Proc. Natl. Acad. Sci. U.S.A.">
        <title>Reductive genome evolution in Buchnera aphidicola.</title>
        <authorList>
            <person name="van Ham R.C.H.J."/>
            <person name="Kamerbeek J."/>
            <person name="Palacios C."/>
            <person name="Rausell C."/>
            <person name="Abascal F."/>
            <person name="Bastolla U."/>
            <person name="Fernandez J.M."/>
            <person name="Jimenez L."/>
            <person name="Postigo M."/>
            <person name="Silva F.J."/>
            <person name="Tamames J."/>
            <person name="Viguera E."/>
            <person name="Latorre A."/>
            <person name="Valencia A."/>
            <person name="Moran F."/>
            <person name="Moya A."/>
        </authorList>
    </citation>
    <scope>NUCLEOTIDE SEQUENCE [LARGE SCALE GENOMIC DNA]</scope>
    <source>
        <strain>Bp</strain>
    </source>
</reference>
<proteinExistence type="inferred from homology"/>
<comment type="cofactor">
    <cofactor evidence="1">
        <name>Mg(2+)</name>
        <dbReference type="ChEBI" id="CHEBI:18420"/>
    </cofactor>
</comment>
<comment type="similarity">
    <text evidence="2">Belongs to the HAD-like hydrolase superfamily. Cof family.</text>
</comment>
<dbReference type="EC" id="3.1.3.-"/>
<dbReference type="EMBL" id="AE016826">
    <property type="protein sequence ID" value="AAO26773.1"/>
    <property type="molecule type" value="Genomic_DNA"/>
</dbReference>
<dbReference type="RefSeq" id="WP_011091174.1">
    <property type="nucleotide sequence ID" value="NC_004545.1"/>
</dbReference>
<dbReference type="SMR" id="Q89B25"/>
<dbReference type="STRING" id="224915.bbp_030"/>
<dbReference type="KEGG" id="bab:bbp_030"/>
<dbReference type="eggNOG" id="COG0561">
    <property type="taxonomic scope" value="Bacteria"/>
</dbReference>
<dbReference type="HOGENOM" id="CLU_044146_5_2_6"/>
<dbReference type="OrthoDB" id="5498330at2"/>
<dbReference type="Proteomes" id="UP000000601">
    <property type="component" value="Chromosome"/>
</dbReference>
<dbReference type="GO" id="GO:0000287">
    <property type="term" value="F:magnesium ion binding"/>
    <property type="evidence" value="ECO:0007669"/>
    <property type="project" value="UniProtKB-ARBA"/>
</dbReference>
<dbReference type="GO" id="GO:0016791">
    <property type="term" value="F:phosphatase activity"/>
    <property type="evidence" value="ECO:0007669"/>
    <property type="project" value="UniProtKB-ARBA"/>
</dbReference>
<dbReference type="CDD" id="cd07516">
    <property type="entry name" value="HAD_Pase"/>
    <property type="match status" value="1"/>
</dbReference>
<dbReference type="Gene3D" id="3.30.1240.10">
    <property type="match status" value="1"/>
</dbReference>
<dbReference type="Gene3D" id="3.40.50.1000">
    <property type="entry name" value="HAD superfamily/HAD-like"/>
    <property type="match status" value="1"/>
</dbReference>
<dbReference type="InterPro" id="IPR000150">
    <property type="entry name" value="Cof"/>
</dbReference>
<dbReference type="InterPro" id="IPR036412">
    <property type="entry name" value="HAD-like_sf"/>
</dbReference>
<dbReference type="InterPro" id="IPR006379">
    <property type="entry name" value="HAD-SF_hydro_IIB"/>
</dbReference>
<dbReference type="InterPro" id="IPR023214">
    <property type="entry name" value="HAD_sf"/>
</dbReference>
<dbReference type="NCBIfam" id="TIGR00099">
    <property type="entry name" value="Cof-subfamily"/>
    <property type="match status" value="1"/>
</dbReference>
<dbReference type="NCBIfam" id="TIGR01484">
    <property type="entry name" value="HAD-SF-IIB"/>
    <property type="match status" value="1"/>
</dbReference>
<dbReference type="PANTHER" id="PTHR47267">
    <property type="match status" value="1"/>
</dbReference>
<dbReference type="PANTHER" id="PTHR47267:SF4">
    <property type="entry name" value="PYRIDOXAL PHOSPHATE PHOSPHATASE YIGL"/>
    <property type="match status" value="1"/>
</dbReference>
<dbReference type="Pfam" id="PF08282">
    <property type="entry name" value="Hydrolase_3"/>
    <property type="match status" value="1"/>
</dbReference>
<dbReference type="SFLD" id="SFLDG01140">
    <property type="entry name" value="C2.B:_Phosphomannomutase_and_P"/>
    <property type="match status" value="1"/>
</dbReference>
<dbReference type="SFLD" id="SFLDS00003">
    <property type="entry name" value="Haloacid_Dehalogenase"/>
    <property type="match status" value="1"/>
</dbReference>
<dbReference type="SUPFAM" id="SSF56784">
    <property type="entry name" value="HAD-like"/>
    <property type="match status" value="1"/>
</dbReference>
<dbReference type="PROSITE" id="PS01228">
    <property type="entry name" value="COF_1"/>
    <property type="match status" value="1"/>
</dbReference>
<gene>
    <name type="ordered locus">bbp_030</name>
</gene>
<protein>
    <recommendedName>
        <fullName>Putative phosphatase bbp_030</fullName>
        <ecNumber>3.1.3.-</ecNumber>
    </recommendedName>
</protein>
<organism>
    <name type="scientific">Buchnera aphidicola subsp. Baizongia pistaciae (strain Bp)</name>
    <dbReference type="NCBI Taxonomy" id="224915"/>
    <lineage>
        <taxon>Bacteria</taxon>
        <taxon>Pseudomonadati</taxon>
        <taxon>Pseudomonadota</taxon>
        <taxon>Gammaproteobacteria</taxon>
        <taxon>Enterobacterales</taxon>
        <taxon>Erwiniaceae</taxon>
        <taxon>Buchnera</taxon>
    </lineage>
</organism>
<name>Y030_BUCBP</name>
<evidence type="ECO:0000250" key="1"/>
<evidence type="ECO:0000305" key="2"/>
<accession>Q89B25</accession>
<keyword id="KW-0378">Hydrolase</keyword>
<keyword id="KW-0460">Magnesium</keyword>
<keyword id="KW-0479">Metal-binding</keyword>
<keyword id="KW-1185">Reference proteome</keyword>